<protein>
    <recommendedName>
        <fullName evidence="6">Fatty acid elongase 6</fullName>
        <ecNumber evidence="7">2.3.1.-</ecNumber>
    </recommendedName>
    <alternativeName>
        <fullName evidence="3">Elongation of fatty acids protein</fullName>
    </alternativeName>
    <alternativeName>
        <fullName evidence="6">PUFA Delta6 elongase</fullName>
    </alternativeName>
</protein>
<dbReference type="EC" id="2.3.1.-" evidence="7"/>
<dbReference type="EMBL" id="FR796428">
    <property type="protein sequence ID" value="CAJ08636.1"/>
    <property type="molecule type" value="Genomic_DNA"/>
</dbReference>
<dbReference type="RefSeq" id="XP_001685432.1">
    <property type="nucleotide sequence ID" value="XM_001685380.1"/>
</dbReference>
<dbReference type="SMR" id="Q4Q5G6"/>
<dbReference type="STRING" id="5664.Q4Q5G6"/>
<dbReference type="EnsemblProtists" id="CAJ08636">
    <property type="protein sequence ID" value="CAJ08636"/>
    <property type="gene ID" value="LMJF_32_1160"/>
</dbReference>
<dbReference type="GeneID" id="5656229"/>
<dbReference type="KEGG" id="lma:LMJF_32_1160"/>
<dbReference type="VEuPathDB" id="TriTrypDB:LmjF.32.1160"/>
<dbReference type="VEuPathDB" id="TriTrypDB:LMJFC_320019500"/>
<dbReference type="VEuPathDB" id="TriTrypDB:LMJLV39_320017600"/>
<dbReference type="VEuPathDB" id="TriTrypDB:LMJSD75_320017600"/>
<dbReference type="eggNOG" id="KOG3071">
    <property type="taxonomic scope" value="Eukaryota"/>
</dbReference>
<dbReference type="HOGENOM" id="CLU_048483_0_1_1"/>
<dbReference type="InParanoid" id="Q4Q5G6"/>
<dbReference type="OMA" id="KGQMWQF"/>
<dbReference type="UniPathway" id="UPA00658"/>
<dbReference type="Proteomes" id="UP000000542">
    <property type="component" value="Chromosome 32"/>
</dbReference>
<dbReference type="GO" id="GO:0005789">
    <property type="term" value="C:endoplasmic reticulum membrane"/>
    <property type="evidence" value="ECO:0000318"/>
    <property type="project" value="GO_Central"/>
</dbReference>
<dbReference type="GO" id="GO:0009922">
    <property type="term" value="F:fatty acid elongase activity"/>
    <property type="evidence" value="ECO:0000318"/>
    <property type="project" value="GO_Central"/>
</dbReference>
<dbReference type="GO" id="GO:0034625">
    <property type="term" value="P:fatty acid elongation, monounsaturated fatty acid"/>
    <property type="evidence" value="ECO:0000318"/>
    <property type="project" value="GO_Central"/>
</dbReference>
<dbReference type="GO" id="GO:0034626">
    <property type="term" value="P:fatty acid elongation, polyunsaturated fatty acid"/>
    <property type="evidence" value="ECO:0000318"/>
    <property type="project" value="GO_Central"/>
</dbReference>
<dbReference type="GO" id="GO:0019367">
    <property type="term" value="P:fatty acid elongation, saturated fatty acid"/>
    <property type="evidence" value="ECO:0000318"/>
    <property type="project" value="GO_Central"/>
</dbReference>
<dbReference type="GO" id="GO:0030148">
    <property type="term" value="P:sphingolipid biosynthetic process"/>
    <property type="evidence" value="ECO:0000318"/>
    <property type="project" value="GO_Central"/>
</dbReference>
<dbReference type="GO" id="GO:0006636">
    <property type="term" value="P:unsaturated fatty acid biosynthetic process"/>
    <property type="evidence" value="ECO:0007669"/>
    <property type="project" value="UniProtKB-UniPathway"/>
</dbReference>
<dbReference type="GO" id="GO:0042761">
    <property type="term" value="P:very long-chain fatty acid biosynthetic process"/>
    <property type="evidence" value="ECO:0000318"/>
    <property type="project" value="GO_Central"/>
</dbReference>
<dbReference type="InterPro" id="IPR030457">
    <property type="entry name" value="ELO_CS"/>
</dbReference>
<dbReference type="InterPro" id="IPR002076">
    <property type="entry name" value="ELO_fam"/>
</dbReference>
<dbReference type="PANTHER" id="PTHR11157:SF126">
    <property type="entry name" value="ELONGATION OF VERY LONG CHAIN FATTY ACIDS PROTEIN"/>
    <property type="match status" value="1"/>
</dbReference>
<dbReference type="PANTHER" id="PTHR11157">
    <property type="entry name" value="FATTY ACID ACYL TRANSFERASE-RELATED"/>
    <property type="match status" value="1"/>
</dbReference>
<dbReference type="Pfam" id="PF01151">
    <property type="entry name" value="ELO"/>
    <property type="match status" value="1"/>
</dbReference>
<dbReference type="PROSITE" id="PS01188">
    <property type="entry name" value="ELO"/>
    <property type="match status" value="1"/>
</dbReference>
<sequence length="381" mass="43245">MVSLEQAEQIAAAIEVPDWVLTKSAALVYSCFGSAANAFESSIKINFPAQHAFVEAWMRARSHPFAERLPYLNPWHVIASILAYLSLIVTLRLLHRVLGKFSCRTLGLVHNLGLHLLSLYMSLGLMISARAAGYSLWNNAVGTSPAEWRIAKLIWLFYVSKVVEWVDTVIMLLKQNYHQVTFLHVYHHTTVFVLWWLALLVAPGGESYYSAMVNSGVHVFMYGYYFLTLLFPSGIVRDVLSKFKFAITKGQMWQFVFNCLQSAYDLVWVPREELKYSAELLQILFWYMISLLALFGNFLVKNKKFSHRRCVDAATASGAKEDTAARSHGDRTHRTRVKAGMTNMQLERLKNEKSTEMKLLMRKNGNGNGQKASLQAMAGSR</sequence>
<accession>Q4Q5G6</accession>
<name>ELO6_LEIMA</name>
<keyword id="KW-0275">Fatty acid biosynthesis</keyword>
<keyword id="KW-0276">Fatty acid metabolism</keyword>
<keyword id="KW-0444">Lipid biosynthesis</keyword>
<keyword id="KW-0443">Lipid metabolism</keyword>
<keyword id="KW-0472">Membrane</keyword>
<keyword id="KW-1185">Reference proteome</keyword>
<keyword id="KW-0808">Transferase</keyword>
<keyword id="KW-0812">Transmembrane</keyword>
<keyword id="KW-1133">Transmembrane helix</keyword>
<reference evidence="9" key="1">
    <citation type="journal article" date="2005" name="Science">
        <title>The genome of the kinetoplastid parasite, Leishmania major.</title>
        <authorList>
            <person name="Ivens A.C."/>
            <person name="Peacock C.S."/>
            <person name="Worthey E.A."/>
            <person name="Murphy L."/>
            <person name="Aggarwal G."/>
            <person name="Berriman M."/>
            <person name="Sisk E."/>
            <person name="Rajandream M.A."/>
            <person name="Adlem E."/>
            <person name="Aert R."/>
            <person name="Anupama A."/>
            <person name="Apostolou Z."/>
            <person name="Attipoe P."/>
            <person name="Bason N."/>
            <person name="Bauser C."/>
            <person name="Beck A."/>
            <person name="Beverley S.M."/>
            <person name="Bianchettin G."/>
            <person name="Borzym K."/>
            <person name="Bothe G."/>
            <person name="Bruschi C.V."/>
            <person name="Collins M."/>
            <person name="Cadag E."/>
            <person name="Ciarloni L."/>
            <person name="Clayton C."/>
            <person name="Coulson R.M.R."/>
            <person name="Cronin A."/>
            <person name="Cruz A.K."/>
            <person name="Davies R.M."/>
            <person name="De Gaudenzi J."/>
            <person name="Dobson D.E."/>
            <person name="Duesterhoeft A."/>
            <person name="Fazelina G."/>
            <person name="Fosker N."/>
            <person name="Frasch A.C."/>
            <person name="Fraser A."/>
            <person name="Fuchs M."/>
            <person name="Gabel C."/>
            <person name="Goble A."/>
            <person name="Goffeau A."/>
            <person name="Harris D."/>
            <person name="Hertz-Fowler C."/>
            <person name="Hilbert H."/>
            <person name="Horn D."/>
            <person name="Huang Y."/>
            <person name="Klages S."/>
            <person name="Knights A."/>
            <person name="Kube M."/>
            <person name="Larke N."/>
            <person name="Litvin L."/>
            <person name="Lord A."/>
            <person name="Louie T."/>
            <person name="Marra M."/>
            <person name="Masuy D."/>
            <person name="Matthews K."/>
            <person name="Michaeli S."/>
            <person name="Mottram J.C."/>
            <person name="Mueller-Auer S."/>
            <person name="Munden H."/>
            <person name="Nelson S."/>
            <person name="Norbertczak H."/>
            <person name="Oliver K."/>
            <person name="O'neil S."/>
            <person name="Pentony M."/>
            <person name="Pohl T.M."/>
            <person name="Price C."/>
            <person name="Purnelle B."/>
            <person name="Quail M.A."/>
            <person name="Rabbinowitsch E."/>
            <person name="Reinhardt R."/>
            <person name="Rieger M."/>
            <person name="Rinta J."/>
            <person name="Robben J."/>
            <person name="Robertson L."/>
            <person name="Ruiz J.C."/>
            <person name="Rutter S."/>
            <person name="Saunders D."/>
            <person name="Schaefer M."/>
            <person name="Schein J."/>
            <person name="Schwartz D.C."/>
            <person name="Seeger K."/>
            <person name="Seyler A."/>
            <person name="Sharp S."/>
            <person name="Shin H."/>
            <person name="Sivam D."/>
            <person name="Squares R."/>
            <person name="Squares S."/>
            <person name="Tosato V."/>
            <person name="Vogt C."/>
            <person name="Volckaert G."/>
            <person name="Wambutt R."/>
            <person name="Warren T."/>
            <person name="Wedler H."/>
            <person name="Woodward J."/>
            <person name="Zhou S."/>
            <person name="Zimmermann W."/>
            <person name="Smith D.F."/>
            <person name="Blackwell J.M."/>
            <person name="Stuart K.D."/>
            <person name="Barrell B.G."/>
            <person name="Myler P.J."/>
        </authorList>
    </citation>
    <scope>NUCLEOTIDE SEQUENCE [LARGE SCALE GENOMIC DNA]</scope>
    <source>
        <strain evidence="9">MHOM/IL/81/Friedlin</strain>
    </source>
</reference>
<reference evidence="9" key="2">
    <citation type="journal article" date="2011" name="Genome Res.">
        <title>Chromosome and gene copy number variation allow major structural change between species and strains of Leishmania.</title>
        <authorList>
            <person name="Rogers M.B."/>
            <person name="Hilley J.D."/>
            <person name="Dickens N.J."/>
            <person name="Wilkes J."/>
            <person name="Bates P.A."/>
            <person name="Depledge D.P."/>
            <person name="Harris D."/>
            <person name="Her Y."/>
            <person name="Herzyk P."/>
            <person name="Imamura H."/>
            <person name="Otto T.D."/>
            <person name="Sanders M."/>
            <person name="Seeger K."/>
            <person name="Dujardin J.C."/>
            <person name="Berriman M."/>
            <person name="Smith D.F."/>
            <person name="Hertz-Fowler C."/>
            <person name="Mottram J.C."/>
        </authorList>
    </citation>
    <scope>NUCLEOTIDE SEQUENCE [LARGE SCALE GENOMIC DNA]</scope>
    <source>
        <strain evidence="9">MHOM/IL/81/Friedlin</strain>
    </source>
</reference>
<reference evidence="7" key="3">
    <citation type="journal article" date="2007" name="FEBS J.">
        <title>Elongation of polyunsaturated fatty acids in trypanosomatids.</title>
        <authorList>
            <person name="Livore V.I."/>
            <person name="Tripodi K.E."/>
            <person name="Uttaro A.D."/>
        </authorList>
    </citation>
    <scope>FUNCTION</scope>
    <scope>SUBSTRATE SPECIFICITY</scope>
</reference>
<feature type="chain" id="PRO_0000459367" description="Fatty acid elongase 6">
    <location>
        <begin position="1"/>
        <end position="381"/>
    </location>
</feature>
<feature type="transmembrane region" description="Helical" evidence="2">
    <location>
        <begin position="10"/>
        <end position="30"/>
    </location>
</feature>
<feature type="transmembrane region" description="Helical" evidence="2">
    <location>
        <begin position="69"/>
        <end position="89"/>
    </location>
</feature>
<feature type="transmembrane region" description="Helical" evidence="2">
    <location>
        <begin position="107"/>
        <end position="127"/>
    </location>
</feature>
<feature type="transmembrane region" description="Helical" evidence="2">
    <location>
        <begin position="153"/>
        <end position="173"/>
    </location>
</feature>
<feature type="transmembrane region" description="Helical" evidence="2">
    <location>
        <begin position="182"/>
        <end position="202"/>
    </location>
</feature>
<feature type="transmembrane region" description="Helical" evidence="2">
    <location>
        <begin position="216"/>
        <end position="236"/>
    </location>
</feature>
<feature type="transmembrane region" description="Helical" evidence="2">
    <location>
        <begin position="280"/>
        <end position="300"/>
    </location>
</feature>
<feature type="region of interest" description="Disordered" evidence="4">
    <location>
        <begin position="362"/>
        <end position="381"/>
    </location>
</feature>
<feature type="short sequence motif" description="HxxHH motif" evidence="6">
    <location>
        <begin position="184"/>
        <end position="188"/>
    </location>
</feature>
<feature type="active site" description="Nucleophile" evidence="1">
    <location>
        <position position="187"/>
    </location>
</feature>
<comment type="function">
    <text evidence="5">Involved in the synthesis of fatty acids (PubMed:17222186). Elongates C18 polyunsaturated fatty acids (PUFAs) with a preference for Delta6 PUFAs (PubMed:17222186).</text>
</comment>
<comment type="pathway">
    <text evidence="7">Lipid metabolism; polyunsaturated fatty acid biosynthesis.</text>
</comment>
<comment type="subcellular location">
    <subcellularLocation>
        <location evidence="2">Membrane</location>
        <topology evidence="2">Multi-pass membrane protein</topology>
    </subcellularLocation>
</comment>
<comment type="similarity">
    <text evidence="3">Belongs to the ELO family.</text>
</comment>
<organism evidence="9">
    <name type="scientific">Leishmania major</name>
    <dbReference type="NCBI Taxonomy" id="5664"/>
    <lineage>
        <taxon>Eukaryota</taxon>
        <taxon>Discoba</taxon>
        <taxon>Euglenozoa</taxon>
        <taxon>Kinetoplastea</taxon>
        <taxon>Metakinetoplastina</taxon>
        <taxon>Trypanosomatida</taxon>
        <taxon>Trypanosomatidae</taxon>
        <taxon>Leishmaniinae</taxon>
        <taxon>Leishmania</taxon>
    </lineage>
</organism>
<proteinExistence type="inferred from homology"/>
<evidence type="ECO:0000250" key="1">
    <source>
        <dbReference type="UniProtKB" id="A1L3X0"/>
    </source>
</evidence>
<evidence type="ECO:0000255" key="2"/>
<evidence type="ECO:0000255" key="3">
    <source>
        <dbReference type="RuleBase" id="RU361115"/>
    </source>
</evidence>
<evidence type="ECO:0000256" key="4">
    <source>
        <dbReference type="SAM" id="MobiDB-lite"/>
    </source>
</evidence>
<evidence type="ECO:0000269" key="5">
    <source>
    </source>
</evidence>
<evidence type="ECO:0000303" key="6">
    <source>
    </source>
</evidence>
<evidence type="ECO:0000305" key="7"/>
<evidence type="ECO:0000312" key="8">
    <source>
        <dbReference type="EMBL" id="CAJ08636.1"/>
    </source>
</evidence>
<evidence type="ECO:0000312" key="9">
    <source>
        <dbReference type="Proteomes" id="UP000000542"/>
    </source>
</evidence>
<gene>
    <name evidence="6" type="primary">ELO6</name>
    <name evidence="8" type="ORF">LMJF_32_1160</name>
</gene>